<proteinExistence type="inferred from homology"/>
<organism>
    <name type="scientific">Vibrio vulnificus (strain YJ016)</name>
    <dbReference type="NCBI Taxonomy" id="196600"/>
    <lineage>
        <taxon>Bacteria</taxon>
        <taxon>Pseudomonadati</taxon>
        <taxon>Pseudomonadota</taxon>
        <taxon>Gammaproteobacteria</taxon>
        <taxon>Vibrionales</taxon>
        <taxon>Vibrionaceae</taxon>
        <taxon>Vibrio</taxon>
    </lineage>
</organism>
<comment type="function">
    <text evidence="1">One of the primary rRNA binding proteins, it binds directly to 16S rRNA where it nucleates assembly of the body of the 30S subunit.</text>
</comment>
<comment type="function">
    <text evidence="1">With S5 and S12 plays an important role in translational accuracy.</text>
</comment>
<comment type="subunit">
    <text evidence="1">Part of the 30S ribosomal subunit. Contacts protein S5. The interaction surface between S4 and S5 is involved in control of translational fidelity.</text>
</comment>
<comment type="similarity">
    <text evidence="1">Belongs to the universal ribosomal protein uS4 family.</text>
</comment>
<reference key="1">
    <citation type="journal article" date="2003" name="Genome Res.">
        <title>Comparative genome analysis of Vibrio vulnificus, a marine pathogen.</title>
        <authorList>
            <person name="Chen C.-Y."/>
            <person name="Wu K.-M."/>
            <person name="Chang Y.-C."/>
            <person name="Chang C.-H."/>
            <person name="Tsai H.-C."/>
            <person name="Liao T.-L."/>
            <person name="Liu Y.-M."/>
            <person name="Chen H.-J."/>
            <person name="Shen A.B.-T."/>
            <person name="Li J.-C."/>
            <person name="Su T.-L."/>
            <person name="Shao C.-P."/>
            <person name="Lee C.-T."/>
            <person name="Hor L.-I."/>
            <person name="Tsai S.-F."/>
        </authorList>
    </citation>
    <scope>NUCLEOTIDE SEQUENCE [LARGE SCALE GENOMIC DNA]</scope>
    <source>
        <strain>YJ016</strain>
    </source>
</reference>
<keyword id="KW-0687">Ribonucleoprotein</keyword>
<keyword id="KW-0689">Ribosomal protein</keyword>
<keyword id="KW-0694">RNA-binding</keyword>
<keyword id="KW-0699">rRNA-binding</keyword>
<accession>Q7MPG5</accession>
<feature type="chain" id="PRO_0000132493" description="Small ribosomal subunit protein uS4">
    <location>
        <begin position="1"/>
        <end position="206"/>
    </location>
</feature>
<feature type="domain" description="S4 RNA-binding" evidence="1">
    <location>
        <begin position="96"/>
        <end position="158"/>
    </location>
</feature>
<gene>
    <name evidence="1" type="primary">rpsD</name>
    <name type="ordered locus">VV0398</name>
</gene>
<dbReference type="EMBL" id="BA000037">
    <property type="protein sequence ID" value="BAC93162.1"/>
    <property type="molecule type" value="Genomic_DNA"/>
</dbReference>
<dbReference type="RefSeq" id="WP_011078811.1">
    <property type="nucleotide sequence ID" value="NC_005139.1"/>
</dbReference>
<dbReference type="SMR" id="Q7MPG5"/>
<dbReference type="STRING" id="672.VV93_v1c03700"/>
<dbReference type="GeneID" id="93895042"/>
<dbReference type="KEGG" id="vvy:VV0398"/>
<dbReference type="eggNOG" id="COG0522">
    <property type="taxonomic scope" value="Bacteria"/>
</dbReference>
<dbReference type="HOGENOM" id="CLU_092403_0_2_6"/>
<dbReference type="Proteomes" id="UP000002675">
    <property type="component" value="Chromosome I"/>
</dbReference>
<dbReference type="GO" id="GO:0015935">
    <property type="term" value="C:small ribosomal subunit"/>
    <property type="evidence" value="ECO:0007669"/>
    <property type="project" value="InterPro"/>
</dbReference>
<dbReference type="GO" id="GO:0019843">
    <property type="term" value="F:rRNA binding"/>
    <property type="evidence" value="ECO:0007669"/>
    <property type="project" value="UniProtKB-UniRule"/>
</dbReference>
<dbReference type="GO" id="GO:0003735">
    <property type="term" value="F:structural constituent of ribosome"/>
    <property type="evidence" value="ECO:0007669"/>
    <property type="project" value="InterPro"/>
</dbReference>
<dbReference type="GO" id="GO:0042274">
    <property type="term" value="P:ribosomal small subunit biogenesis"/>
    <property type="evidence" value="ECO:0007669"/>
    <property type="project" value="TreeGrafter"/>
</dbReference>
<dbReference type="GO" id="GO:0006412">
    <property type="term" value="P:translation"/>
    <property type="evidence" value="ECO:0007669"/>
    <property type="project" value="UniProtKB-UniRule"/>
</dbReference>
<dbReference type="CDD" id="cd00165">
    <property type="entry name" value="S4"/>
    <property type="match status" value="1"/>
</dbReference>
<dbReference type="FunFam" id="1.10.1050.10:FF:000001">
    <property type="entry name" value="30S ribosomal protein S4"/>
    <property type="match status" value="1"/>
</dbReference>
<dbReference type="FunFam" id="3.10.290.10:FF:000001">
    <property type="entry name" value="30S ribosomal protein S4"/>
    <property type="match status" value="1"/>
</dbReference>
<dbReference type="Gene3D" id="1.10.1050.10">
    <property type="entry name" value="Ribosomal Protein S4 Delta 41, Chain A, domain 1"/>
    <property type="match status" value="1"/>
</dbReference>
<dbReference type="Gene3D" id="3.10.290.10">
    <property type="entry name" value="RNA-binding S4 domain"/>
    <property type="match status" value="1"/>
</dbReference>
<dbReference type="HAMAP" id="MF_01306_B">
    <property type="entry name" value="Ribosomal_uS4_B"/>
    <property type="match status" value="1"/>
</dbReference>
<dbReference type="InterPro" id="IPR022801">
    <property type="entry name" value="Ribosomal_uS4"/>
</dbReference>
<dbReference type="InterPro" id="IPR005709">
    <property type="entry name" value="Ribosomal_uS4_bac-type"/>
</dbReference>
<dbReference type="InterPro" id="IPR018079">
    <property type="entry name" value="Ribosomal_uS4_CS"/>
</dbReference>
<dbReference type="InterPro" id="IPR001912">
    <property type="entry name" value="Ribosomal_uS4_N"/>
</dbReference>
<dbReference type="InterPro" id="IPR002942">
    <property type="entry name" value="S4_RNA-bd"/>
</dbReference>
<dbReference type="InterPro" id="IPR036986">
    <property type="entry name" value="S4_RNA-bd_sf"/>
</dbReference>
<dbReference type="NCBIfam" id="NF003717">
    <property type="entry name" value="PRK05327.1"/>
    <property type="match status" value="1"/>
</dbReference>
<dbReference type="NCBIfam" id="TIGR01017">
    <property type="entry name" value="rpsD_bact"/>
    <property type="match status" value="1"/>
</dbReference>
<dbReference type="PANTHER" id="PTHR11831">
    <property type="entry name" value="30S 40S RIBOSOMAL PROTEIN"/>
    <property type="match status" value="1"/>
</dbReference>
<dbReference type="PANTHER" id="PTHR11831:SF4">
    <property type="entry name" value="SMALL RIBOSOMAL SUBUNIT PROTEIN US4M"/>
    <property type="match status" value="1"/>
</dbReference>
<dbReference type="Pfam" id="PF00163">
    <property type="entry name" value="Ribosomal_S4"/>
    <property type="match status" value="1"/>
</dbReference>
<dbReference type="Pfam" id="PF01479">
    <property type="entry name" value="S4"/>
    <property type="match status" value="1"/>
</dbReference>
<dbReference type="SMART" id="SM01390">
    <property type="entry name" value="Ribosomal_S4"/>
    <property type="match status" value="1"/>
</dbReference>
<dbReference type="SMART" id="SM00363">
    <property type="entry name" value="S4"/>
    <property type="match status" value="1"/>
</dbReference>
<dbReference type="SUPFAM" id="SSF55174">
    <property type="entry name" value="Alpha-L RNA-binding motif"/>
    <property type="match status" value="1"/>
</dbReference>
<dbReference type="PROSITE" id="PS00632">
    <property type="entry name" value="RIBOSOMAL_S4"/>
    <property type="match status" value="1"/>
</dbReference>
<dbReference type="PROSITE" id="PS50889">
    <property type="entry name" value="S4"/>
    <property type="match status" value="1"/>
</dbReference>
<sequence length="206" mass="23320">MARYLGPKLKLSRREGTDLFLKSGVRAIDTKCKIDNAPGVHGARRGRLSEYGVQLREKQKVRRMYGVLEKQFRNYYAEAARLKGNTGENLLQLLEGRLDNVVYRMGFGATRAEARQLVSHKAILVNGKVVNVPSFKVAANDVVSIREKAKQQTRIKAALEVAEQREKPTWIEVDAGKMEGTFKRMPERSDLSADINEQLIVELYSK</sequence>
<protein>
    <recommendedName>
        <fullName evidence="1">Small ribosomal subunit protein uS4</fullName>
    </recommendedName>
    <alternativeName>
        <fullName evidence="2">30S ribosomal protein S4</fullName>
    </alternativeName>
</protein>
<evidence type="ECO:0000255" key="1">
    <source>
        <dbReference type="HAMAP-Rule" id="MF_01306"/>
    </source>
</evidence>
<evidence type="ECO:0000305" key="2"/>
<name>RS4_VIBVY</name>